<sequence>MAAMAVGGAGGSRVSSGRDLNCVPEIADTLGAVAKQGFDFLCMPVFHPRFKREFIQEPAKNRPGPQTRSDLLLSGRDWNTLIVGKLSPWIHPDSKVEKIRRNSEAAMLQELNFGAYLGLPAFLLPLNQEDNTNLARVLTNHIHTGHHSSMFWMRVPLVAPEDLRDDVIANAPTTHTEEYSGEEKTWMWWHNFRTLCDYSKRIAVALEIGADLPSNHVIDRWLGEPIKAAILPTSIFLTNKKGFPVLSKVQQRLIFRLLKLEVQFIITGTNHHSEKEFCSYLQYLEYLSQNRPPPNAYELFAKGYEDYLQSPLQPLMDNLESQTYEVFEKDPIKYSQYQQAIYKCLLDRVPEEEKETNVQVLMVLGAGRGPLVNASLRAAKQAERRIRLYAVEKNPNAVVTLENWQFEEWGSQVTVVSSDMREWVAPEKADIIVSELLGSFADNELSPECLDGAQHFLKDDGVSIPGEYTSFLAPISSSKLYNEVRACREKDRDPEAQFEMPYVVRLHNFHQLSAPKPCFTFSHPNRDPMIDNNRYCTLEFPVEVNTVLHGFAGYFETVLYRDITLSIRPETHSPGMFSWFPIFFPIKQPITVHEGQNICVRFWRCSNSKKVWYEWAVTAPVCSSIHNPTGRSYTIGL</sequence>
<reference key="1">
    <citation type="journal article" date="2005" name="Science">
        <title>The transcriptional landscape of the mammalian genome.</title>
        <authorList>
            <person name="Carninci P."/>
            <person name="Kasukawa T."/>
            <person name="Katayama S."/>
            <person name="Gough J."/>
            <person name="Frith M.C."/>
            <person name="Maeda N."/>
            <person name="Oyama R."/>
            <person name="Ravasi T."/>
            <person name="Lenhard B."/>
            <person name="Wells C."/>
            <person name="Kodzius R."/>
            <person name="Shimokawa K."/>
            <person name="Bajic V.B."/>
            <person name="Brenner S.E."/>
            <person name="Batalov S."/>
            <person name="Forrest A.R."/>
            <person name="Zavolan M."/>
            <person name="Davis M.J."/>
            <person name="Wilming L.G."/>
            <person name="Aidinis V."/>
            <person name="Allen J.E."/>
            <person name="Ambesi-Impiombato A."/>
            <person name="Apweiler R."/>
            <person name="Aturaliya R.N."/>
            <person name="Bailey T.L."/>
            <person name="Bansal M."/>
            <person name="Baxter L."/>
            <person name="Beisel K.W."/>
            <person name="Bersano T."/>
            <person name="Bono H."/>
            <person name="Chalk A.M."/>
            <person name="Chiu K.P."/>
            <person name="Choudhary V."/>
            <person name="Christoffels A."/>
            <person name="Clutterbuck D.R."/>
            <person name="Crowe M.L."/>
            <person name="Dalla E."/>
            <person name="Dalrymple B.P."/>
            <person name="de Bono B."/>
            <person name="Della Gatta G."/>
            <person name="di Bernardo D."/>
            <person name="Down T."/>
            <person name="Engstrom P."/>
            <person name="Fagiolini M."/>
            <person name="Faulkner G."/>
            <person name="Fletcher C.F."/>
            <person name="Fukushima T."/>
            <person name="Furuno M."/>
            <person name="Futaki S."/>
            <person name="Gariboldi M."/>
            <person name="Georgii-Hemming P."/>
            <person name="Gingeras T.R."/>
            <person name="Gojobori T."/>
            <person name="Green R.E."/>
            <person name="Gustincich S."/>
            <person name="Harbers M."/>
            <person name="Hayashi Y."/>
            <person name="Hensch T.K."/>
            <person name="Hirokawa N."/>
            <person name="Hill D."/>
            <person name="Huminiecki L."/>
            <person name="Iacono M."/>
            <person name="Ikeo K."/>
            <person name="Iwama A."/>
            <person name="Ishikawa T."/>
            <person name="Jakt M."/>
            <person name="Kanapin A."/>
            <person name="Katoh M."/>
            <person name="Kawasawa Y."/>
            <person name="Kelso J."/>
            <person name="Kitamura H."/>
            <person name="Kitano H."/>
            <person name="Kollias G."/>
            <person name="Krishnan S.P."/>
            <person name="Kruger A."/>
            <person name="Kummerfeld S.K."/>
            <person name="Kurochkin I.V."/>
            <person name="Lareau L.F."/>
            <person name="Lazarevic D."/>
            <person name="Lipovich L."/>
            <person name="Liu J."/>
            <person name="Liuni S."/>
            <person name="McWilliam S."/>
            <person name="Madan Babu M."/>
            <person name="Madera M."/>
            <person name="Marchionni L."/>
            <person name="Matsuda H."/>
            <person name="Matsuzawa S."/>
            <person name="Miki H."/>
            <person name="Mignone F."/>
            <person name="Miyake S."/>
            <person name="Morris K."/>
            <person name="Mottagui-Tabar S."/>
            <person name="Mulder N."/>
            <person name="Nakano N."/>
            <person name="Nakauchi H."/>
            <person name="Ng P."/>
            <person name="Nilsson R."/>
            <person name="Nishiguchi S."/>
            <person name="Nishikawa S."/>
            <person name="Nori F."/>
            <person name="Ohara O."/>
            <person name="Okazaki Y."/>
            <person name="Orlando V."/>
            <person name="Pang K.C."/>
            <person name="Pavan W.J."/>
            <person name="Pavesi G."/>
            <person name="Pesole G."/>
            <person name="Petrovsky N."/>
            <person name="Piazza S."/>
            <person name="Reed J."/>
            <person name="Reid J.F."/>
            <person name="Ring B.Z."/>
            <person name="Ringwald M."/>
            <person name="Rost B."/>
            <person name="Ruan Y."/>
            <person name="Salzberg S.L."/>
            <person name="Sandelin A."/>
            <person name="Schneider C."/>
            <person name="Schoenbach C."/>
            <person name="Sekiguchi K."/>
            <person name="Semple C.A."/>
            <person name="Seno S."/>
            <person name="Sessa L."/>
            <person name="Sheng Y."/>
            <person name="Shibata Y."/>
            <person name="Shimada H."/>
            <person name="Shimada K."/>
            <person name="Silva D."/>
            <person name="Sinclair B."/>
            <person name="Sperling S."/>
            <person name="Stupka E."/>
            <person name="Sugiura K."/>
            <person name="Sultana R."/>
            <person name="Takenaka Y."/>
            <person name="Taki K."/>
            <person name="Tammoja K."/>
            <person name="Tan S.L."/>
            <person name="Tang S."/>
            <person name="Taylor M.S."/>
            <person name="Tegner J."/>
            <person name="Teichmann S.A."/>
            <person name="Ueda H.R."/>
            <person name="van Nimwegen E."/>
            <person name="Verardo R."/>
            <person name="Wei C.L."/>
            <person name="Yagi K."/>
            <person name="Yamanishi H."/>
            <person name="Zabarovsky E."/>
            <person name="Zhu S."/>
            <person name="Zimmer A."/>
            <person name="Hide W."/>
            <person name="Bult C."/>
            <person name="Grimmond S.M."/>
            <person name="Teasdale R.D."/>
            <person name="Liu E.T."/>
            <person name="Brusic V."/>
            <person name="Quackenbush J."/>
            <person name="Wahlestedt C."/>
            <person name="Mattick J.S."/>
            <person name="Hume D.A."/>
            <person name="Kai C."/>
            <person name="Sasaki D."/>
            <person name="Tomaru Y."/>
            <person name="Fukuda S."/>
            <person name="Kanamori-Katayama M."/>
            <person name="Suzuki M."/>
            <person name="Aoki J."/>
            <person name="Arakawa T."/>
            <person name="Iida J."/>
            <person name="Imamura K."/>
            <person name="Itoh M."/>
            <person name="Kato T."/>
            <person name="Kawaji H."/>
            <person name="Kawagashira N."/>
            <person name="Kawashima T."/>
            <person name="Kojima M."/>
            <person name="Kondo S."/>
            <person name="Konno H."/>
            <person name="Nakano K."/>
            <person name="Ninomiya N."/>
            <person name="Nishio T."/>
            <person name="Okada M."/>
            <person name="Plessy C."/>
            <person name="Shibata K."/>
            <person name="Shiraki T."/>
            <person name="Suzuki S."/>
            <person name="Tagami M."/>
            <person name="Waki K."/>
            <person name="Watahiki A."/>
            <person name="Okamura-Oho Y."/>
            <person name="Suzuki H."/>
            <person name="Kawai J."/>
            <person name="Hayashizaki Y."/>
        </authorList>
    </citation>
    <scope>NUCLEOTIDE SEQUENCE [LARGE SCALE MRNA]</scope>
    <source>
        <strain>C57BL/6J</strain>
        <tissue>Skin</tissue>
    </source>
</reference>
<reference key="2">
    <citation type="journal article" date="2004" name="Genome Res.">
        <title>The status, quality, and expansion of the NIH full-length cDNA project: the Mammalian Gene Collection (MGC).</title>
        <authorList>
            <consortium name="The MGC Project Team"/>
        </authorList>
    </citation>
    <scope>NUCLEOTIDE SEQUENCE [LARGE SCALE MRNA]</scope>
    <source>
        <strain>FVB/N</strain>
        <tissue>Mammary tumor</tissue>
    </source>
</reference>
<reference key="3">
    <citation type="journal article" date="1999" name="J. Biol. Chem.">
        <title>The human homologue of the yeast proteins Skb1 and Hsl7p interacts with Jak kinases and contains protein methyltransferase activity.</title>
        <authorList>
            <person name="Pollack B.P."/>
            <person name="Kotenko S.V."/>
            <person name="He W."/>
            <person name="Izotova L.S."/>
            <person name="Barnoski B.L."/>
            <person name="Pestka S."/>
        </authorList>
    </citation>
    <scope>NUCLEOTIDE SEQUENCE [MRNA] OF 7-637</scope>
</reference>
<reference key="4">
    <citation type="journal article" date="2004" name="Mol. Cell. Biol.">
        <title>Human SWI/SNF-associated PRMT5 methylates histone H3 arginine 8 and negatively regulates expression of ST7 and NM23 tumor suppressor genes.</title>
        <authorList>
            <person name="Pal S."/>
            <person name="Vishwanath S.N."/>
            <person name="Erdjument-Bromage H."/>
            <person name="Tempst P."/>
            <person name="Sif S."/>
        </authorList>
    </citation>
    <scope>FUNCTION IN METHYLATION OF HISTONE H3</scope>
</reference>
<reference key="5">
    <citation type="journal article" date="2006" name="Nat. Cell Biol.">
        <title>Blimp1 associates with Prmt5 and directs histone arginine methylation in mouse germ cells.</title>
        <authorList>
            <person name="Ancelin K."/>
            <person name="Lange U.C."/>
            <person name="Hajkova P."/>
            <person name="Schneider R."/>
            <person name="Bannister A.J."/>
            <person name="Kouzarides T."/>
            <person name="Surani M.A."/>
        </authorList>
    </citation>
    <scope>FUNCTION</scope>
    <scope>INTERACTION WITH PRDM1</scope>
</reference>
<reference key="6">
    <citation type="journal article" date="2009" name="Genes Dev.">
        <title>Proteomic analysis of murine Piwi proteins reveals a role for arginine methylation in specifying interaction with Tudor family members.</title>
        <authorList>
            <person name="Vagin V.V."/>
            <person name="Wohlschlegel J."/>
            <person name="Qu J."/>
            <person name="Jonsson Z."/>
            <person name="Huang X."/>
            <person name="Chuma S."/>
            <person name="Girard A."/>
            <person name="Sachidanandam R."/>
            <person name="Hannon G.J."/>
            <person name="Aravin A.A."/>
        </authorList>
    </citation>
    <scope>FUNCTION IN METHYLATION OF PIWI PROTEINS</scope>
</reference>
<reference key="7">
    <citation type="journal article" date="2010" name="Cell">
        <title>A tissue-specific atlas of mouse protein phosphorylation and expression.</title>
        <authorList>
            <person name="Huttlin E.L."/>
            <person name="Jedrychowski M.P."/>
            <person name="Elias J.E."/>
            <person name="Goswami T."/>
            <person name="Rad R."/>
            <person name="Beausoleil S.A."/>
            <person name="Villen J."/>
            <person name="Haas W."/>
            <person name="Sowa M.E."/>
            <person name="Gygi S.P."/>
        </authorList>
    </citation>
    <scope>IDENTIFICATION BY MASS SPECTROMETRY [LARGE SCALE ANALYSIS]</scope>
    <source>
        <tissue>Brain</tissue>
        <tissue>Brown adipose tissue</tissue>
        <tissue>Heart</tissue>
        <tissue>Kidney</tissue>
        <tissue>Liver</tissue>
        <tissue>Lung</tissue>
        <tissue>Pancreas</tissue>
        <tissue>Spleen</tissue>
        <tissue>Testis</tissue>
    </source>
</reference>
<reference key="8">
    <citation type="journal article" date="2010" name="Mol. Cell. Biol.">
        <title>Friend of Prmt1, a novel chromatin target of protein arginine methyltransferases.</title>
        <authorList>
            <person name="van Dijk T.B."/>
            <person name="Gillemans N."/>
            <person name="Stein C."/>
            <person name="Fanis P."/>
            <person name="Demmers J."/>
            <person name="van de Corput M."/>
            <person name="Essers J."/>
            <person name="Grosveld F."/>
            <person name="Bauer U.M."/>
            <person name="Philipsen S."/>
        </authorList>
    </citation>
    <scope>FUNCTION</scope>
    <scope>INTERACTION WITH CHTOP</scope>
</reference>
<reference key="9">
    <citation type="journal article" date="2011" name="Sci. Signal.">
        <title>Protein arginine methyltransferase 5 regulates ERK1/2 signal transduction amplitude and cell fate through CRAF.</title>
        <authorList>
            <person name="Andreu-Perez P."/>
            <person name="Esteve-Puig R."/>
            <person name="de Torre-Minguela C."/>
            <person name="Lopez-Fauqued M."/>
            <person name="Bech-Serra J.J."/>
            <person name="Tenbaum S."/>
            <person name="Garcia-Trevijano E.R."/>
            <person name="Canals F."/>
            <person name="Merlino G."/>
            <person name="Avila M.A."/>
            <person name="Recio J.A."/>
        </authorList>
    </citation>
    <scope>FUNCTION IN THE REGULATION OF MAPK1/MAPK3 SIGNALING PATHWAY</scope>
    <scope>RAF1 METHYLATION</scope>
</reference>
<reference key="10">
    <citation type="journal article" date="2012" name="Mol. Cell. Proteomics">
        <title>Five friends of methylated chromatin target of protein-arginine-methyltransferase[prmt]-1 (chtop), a complex linking arginine methylation to desumoylation.</title>
        <authorList>
            <person name="Fanis P."/>
            <person name="Gillemans N."/>
            <person name="Aghajanirefah A."/>
            <person name="Pourfarzad F."/>
            <person name="Demmers J."/>
            <person name="Esteghamat F."/>
            <person name="Vadlamudi R.K."/>
            <person name="Grosveld F."/>
            <person name="Philipsen S."/>
            <person name="van Dijk T.B."/>
        </authorList>
    </citation>
    <scope>INTERACTION WITH CHTOP</scope>
    <scope>SUBCELLULAR LOCATION</scope>
</reference>
<reference key="11">
    <citation type="journal article" date="2012" name="Cell Death Differ.">
        <title>The histone- and PRMT5-associated protein COPR5 is required for myogenic differentiation.</title>
        <authorList>
            <person name="Paul C."/>
            <person name="Sardet C."/>
            <person name="Fabbrizio E."/>
        </authorList>
    </citation>
    <scope>INTERACTION WITH COPRS</scope>
    <scope>IDENTIFICATION IN A COMPLEX WITH PRMT5; RUNX1 AND CBFB</scope>
</reference>
<reference key="12">
    <citation type="journal article" date="2012" name="PLoS ONE">
        <title>Role of type II protein arginine methyltransferase 5 in the regulation of Circadian Per1 gene.</title>
        <authorList>
            <person name="Na J."/>
            <person name="Lee K."/>
            <person name="Kim H.G."/>
            <person name="Shin J.Y."/>
            <person name="Na W."/>
            <person name="Jeong H."/>
            <person name="Lee J.W."/>
            <person name="Cho S."/>
            <person name="Kim W.S."/>
            <person name="Ju B.G."/>
        </authorList>
    </citation>
    <scope>FUNCTION</scope>
    <scope>INTERACTION WITH CRY1</scope>
</reference>
<reference key="13">
    <citation type="journal article" date="2017" name="PLoS Genet.">
        <title>TDRD6 mediates early steps of spliceosome maturation in primary spermatocytes.</title>
        <authorList>
            <person name="Akpinar M."/>
            <person name="Lesche M."/>
            <person name="Fanourgakis G."/>
            <person name="Fu J."/>
            <person name="Anastassiadis K."/>
            <person name="Dahl A."/>
            <person name="Jessberger R."/>
        </authorList>
    </citation>
    <scope>FUNCTION</scope>
    <scope>INTERACTION WITH TDRD6</scope>
    <scope>CATALYTIC ACTIVITY</scope>
</reference>
<evidence type="ECO:0000250" key="1"/>
<evidence type="ECO:0000250" key="2">
    <source>
        <dbReference type="UniProtKB" id="O14744"/>
    </source>
</evidence>
<evidence type="ECO:0000250" key="3">
    <source>
        <dbReference type="UniProtKB" id="P46580"/>
    </source>
</evidence>
<evidence type="ECO:0000255" key="4">
    <source>
        <dbReference type="PROSITE-ProRule" id="PRU01015"/>
    </source>
</evidence>
<evidence type="ECO:0000269" key="5">
    <source>
    </source>
</evidence>
<evidence type="ECO:0000269" key="6">
    <source>
    </source>
</evidence>
<evidence type="ECO:0000269" key="7">
    <source>
    </source>
</evidence>
<evidence type="ECO:0000269" key="8">
    <source>
    </source>
</evidence>
<evidence type="ECO:0000269" key="9">
    <source>
    </source>
</evidence>
<evidence type="ECO:0000269" key="10">
    <source>
    </source>
</evidence>
<evidence type="ECO:0000269" key="11">
    <source>
    </source>
</evidence>
<evidence type="ECO:0000269" key="12">
    <source>
    </source>
</evidence>
<evidence type="ECO:0000269" key="13">
    <source>
    </source>
</evidence>
<evidence type="ECO:0000305" key="14"/>
<keyword id="KW-0007">Acetylation</keyword>
<keyword id="KW-0090">Biological rhythms</keyword>
<keyword id="KW-0156">Chromatin regulator</keyword>
<keyword id="KW-0963">Cytoplasm</keyword>
<keyword id="KW-0333">Golgi apparatus</keyword>
<keyword id="KW-0489">Methyltransferase</keyword>
<keyword id="KW-0539">Nucleus</keyword>
<keyword id="KW-1185">Reference proteome</keyword>
<keyword id="KW-0678">Repressor</keyword>
<keyword id="KW-0949">S-adenosyl-L-methionine</keyword>
<keyword id="KW-0804">Transcription</keyword>
<keyword id="KW-0805">Transcription regulation</keyword>
<keyword id="KW-0808">Transferase</keyword>
<proteinExistence type="evidence at protein level"/>
<feature type="initiator methionine" description="Removed" evidence="2">
    <location>
        <position position="1"/>
    </location>
</feature>
<feature type="chain" id="PRO_0000212344" description="Protein arginine N-methyltransferase 5">
    <location>
        <begin position="2"/>
        <end position="637"/>
    </location>
</feature>
<feature type="domain" description="SAM-dependent MTase PRMT-type" evidence="4">
    <location>
        <begin position="308"/>
        <end position="615"/>
    </location>
</feature>
<feature type="region of interest" description="TIM barrel" evidence="2">
    <location>
        <begin position="13"/>
        <end position="292"/>
    </location>
</feature>
<feature type="region of interest" description="Beta barrel" evidence="2">
    <location>
        <begin position="465"/>
        <end position="637"/>
    </location>
</feature>
<feature type="region of interest" description="Dimerization" evidence="2">
    <location>
        <begin position="488"/>
        <end position="494"/>
    </location>
</feature>
<feature type="active site" description="Proton donor/acceptor" evidence="2">
    <location>
        <position position="435"/>
    </location>
</feature>
<feature type="active site" description="Proton donor/acceptor" evidence="2">
    <location>
        <position position="444"/>
    </location>
</feature>
<feature type="binding site" evidence="2">
    <location>
        <position position="324"/>
    </location>
    <ligand>
        <name>S-adenosyl-L-methionine</name>
        <dbReference type="ChEBI" id="CHEBI:59789"/>
    </ligand>
</feature>
<feature type="binding site" evidence="2">
    <location>
        <position position="327"/>
    </location>
    <ligand>
        <name>a protein</name>
        <dbReference type="ChEBI" id="CHEBI:16541"/>
        <note>substrate</note>
    </ligand>
    <ligandPart>
        <name>L-arginine residue</name>
        <dbReference type="ChEBI" id="CHEBI:29965"/>
    </ligandPart>
</feature>
<feature type="binding site" evidence="2">
    <location>
        <begin position="333"/>
        <end position="334"/>
    </location>
    <ligand>
        <name>S-adenosyl-L-methionine</name>
        <dbReference type="ChEBI" id="CHEBI:59789"/>
    </ligand>
</feature>
<feature type="binding site" evidence="2">
    <location>
        <position position="392"/>
    </location>
    <ligand>
        <name>S-adenosyl-L-methionine</name>
        <dbReference type="ChEBI" id="CHEBI:59789"/>
    </ligand>
</feature>
<feature type="binding site" evidence="2">
    <location>
        <begin position="419"/>
        <end position="420"/>
    </location>
    <ligand>
        <name>S-adenosyl-L-methionine</name>
        <dbReference type="ChEBI" id="CHEBI:59789"/>
    </ligand>
</feature>
<feature type="binding site" evidence="2">
    <location>
        <position position="435"/>
    </location>
    <ligand>
        <name>a protein</name>
        <dbReference type="ChEBI" id="CHEBI:16541"/>
        <note>substrate</note>
    </ligand>
    <ligandPart>
        <name>L-arginine residue</name>
        <dbReference type="ChEBI" id="CHEBI:29965"/>
    </ligandPart>
</feature>
<feature type="binding site" evidence="2">
    <location>
        <position position="444"/>
    </location>
    <ligand>
        <name>a protein</name>
        <dbReference type="ChEBI" id="CHEBI:16541"/>
        <note>substrate</note>
    </ligand>
    <ligandPart>
        <name>L-arginine residue</name>
        <dbReference type="ChEBI" id="CHEBI:29965"/>
    </ligandPart>
</feature>
<feature type="site" description="Critical for specifying symmetric addition of methyl groups" evidence="3">
    <location>
        <position position="327"/>
    </location>
</feature>
<feature type="modified residue" description="N-acetylalanine" evidence="2">
    <location>
        <position position="2"/>
    </location>
</feature>
<feature type="sequence conflict" description="In Ref. 1; BAE21155/BAE38057." evidence="14" ref="1">
    <original>A</original>
    <variation>E</variation>
    <location>
        <position position="169"/>
    </location>
</feature>
<feature type="sequence conflict" description="In Ref. 3; AAF04503." evidence="14" ref="3">
    <original>L</original>
    <variation>F</variation>
    <location>
        <position position="376"/>
    </location>
</feature>
<organism>
    <name type="scientific">Mus musculus</name>
    <name type="common">Mouse</name>
    <dbReference type="NCBI Taxonomy" id="10090"/>
    <lineage>
        <taxon>Eukaryota</taxon>
        <taxon>Metazoa</taxon>
        <taxon>Chordata</taxon>
        <taxon>Craniata</taxon>
        <taxon>Vertebrata</taxon>
        <taxon>Euteleostomi</taxon>
        <taxon>Mammalia</taxon>
        <taxon>Eutheria</taxon>
        <taxon>Euarchontoglires</taxon>
        <taxon>Glires</taxon>
        <taxon>Rodentia</taxon>
        <taxon>Myomorpha</taxon>
        <taxon>Muroidea</taxon>
        <taxon>Muridae</taxon>
        <taxon>Murinae</taxon>
        <taxon>Mus</taxon>
        <taxon>Mus</taxon>
    </lineage>
</organism>
<comment type="function">
    <text evidence="2 5 6 7 8 9 12 13">Arginine methyltransferase that can both catalyze the formation of omega-N monomethylarginine (MMA) and symmetrical dimethylarginine (sDMA), with a preference for the formation of MMA (PubMed:15485929, PubMed:19584108, PubMed:19858291, PubMed:21917714, PubMed:23133559, PubMed:28263986). Specifically mediates the symmetrical dimethylation of arginine residues in the small nuclear ribonucleoproteins Sm D1 (SNRPD1) and Sm D3 (SNRPD3); such methylation being required for the assembly and biogenesis of snRNP core particles. Methylates SUPT5H and may regulate its transcriptional elongation properties (By similarity). May methylate the N-terminal region of MBD2 (By similarity). Mono- and dimethylates arginine residues of myelin basic protein (MBP) in vitro. May play a role in cytokine-activated transduction pathways. Negatively regulates cyclin E1 promoter activity and cellular proliferation (By similarity). Methylates histone H2A and H4 'Arg-3' during germ cell development (PubMed:16699504). Methylates histone H3 'Arg-8', which may repress transcription (PubMed:15485929). Methylates the Piwi proteins (PIWIL1, PIWIL2 and PIWIL4), methylation of Piwi proteins being required for the interaction with Tudor domain-containing proteins and subsequent localization to the meiotic nuage (PubMed:19584108). Methylates RPS10 (By similarity). Attenuates EGF signaling through the MAPK1/MAPK3 pathway acting at 2 levels. First, monomethylates EGFR; this enhances EGFR 'Tyr-1197' phosphorylation and PTPN6 recruitment, eventually leading to reduced SOS1 phosphorylation. Second, methylates RAF1 and probably BRAF, hence destabilizing these 2 signaling proteins and reducing their catalytic activity (PubMed:21917714). Required for induction of E-selectin and VCAM-1, on the endothelial cells surface at sites of inflammation. Methylates HOXA9. Methylates and regulates SRGAP2 which is involved in cell migration and differentiation (By similarity). Acts as a transcriptional corepressor in CRY1-mediated repression of the core circadian component PER1 by regulating the H4R3 dimethylation at the PER1 promoter (PubMed:23133559). Methylates GM130/GOLGA2, regulating Golgi ribbon formation. Methylates H4R3 in genes involved in glioblastomagenesis in a CHTOP- and/or TET1-dependent manner. Symmetrically methylates POLR2A, a modification that allows the recruitment to POLR2A of proteins including SMN1/SMN2 and SETX. This is required for resolving RNA-DNA hybrids created by RNA polymerase II, that form R-loop in transcription terminal regions, an important step in proper transcription termination. Along with LYAR, binds the promoter of gamma-globin HBG1/HBG2 and represses its expression. Symmetrically methylates NCL. Methylates p53/TP53; methylation might possibly affect p53/TP53 target gene specificity (By similarity). Involved in spliceosome maturation and mRNA splicing in prophase I spermatocytes through the catalysis of the symmetrical arginine dimethylation of SNRPB (small nuclear ribonucleoprotein-associated protein) and the interaction with tudor domain-containing protein TDRD6 (PubMed:28263986).</text>
</comment>
<comment type="catalytic activity">
    <reaction evidence="13">
        <text>L-arginyl-[protein] + 2 S-adenosyl-L-methionine = N(omega),N(omega)'-dimethyl-L-arginyl-[protein] + 2 S-adenosyl-L-homocysteine + 2 H(+)</text>
        <dbReference type="Rhea" id="RHEA:48108"/>
        <dbReference type="Rhea" id="RHEA-COMP:10532"/>
        <dbReference type="Rhea" id="RHEA-COMP:11992"/>
        <dbReference type="ChEBI" id="CHEBI:15378"/>
        <dbReference type="ChEBI" id="CHEBI:29965"/>
        <dbReference type="ChEBI" id="CHEBI:57856"/>
        <dbReference type="ChEBI" id="CHEBI:59789"/>
        <dbReference type="ChEBI" id="CHEBI:88221"/>
        <dbReference type="EC" id="2.1.1.320"/>
    </reaction>
</comment>
<comment type="activity regulation">
    <text evidence="1">Activity is increased by EGF, HGF, FGF1 or FGF2 treatments, and slightly decreased by NGF treatment.</text>
</comment>
<comment type="subunit">
    <text evidence="2 6 8 10 11 12 13">Forms, at least, homodimers and homotetramers. Component of the methylosome complex, composed of PRMT5, WDR77 and CLNS1A. Found in a complex composed of PRMT5, WDR77 and RIOK1. RIOK1 and CLNS1A associate with PRMT5 in a mutually exclusive fashion, which allows the recruitment of distinct methylation substrates, such as nucleolin/NCL and Sm proteins, respectively (By similarity). Interacts with PRDM1 (PubMed:16699504). Identified in a complex composed of methylosome and PRMT1 and ERH. Interacts with EGFR; methylates EGFR and stimulates EGFR-mediated ERK activation. Interacts with HOXA9. Interacts with SRGAP2 (By similarity). Found in a complex with COPRS, RUNX1 and CBFB (PubMed:22193545). Interacts with CHTOP; the interaction symmetrically methylates CHTOP, but seems to require the presence of PRMT1 (PubMed:19858291, PubMed:22872859). Interacts with EPB41L3; this modulates methylation of target proteins. Component of a high molecular weight E2F-pocket protein complex, CERC (cyclin E1 repressor complex). Associates with SWI/SNF remodeling complexes containing SMARCA2 and SMARCA4. Interacts with JAK2, SSTR1, SUPT5H, BRAF and with active RAF1. Interacts with LSM11, PRMT7 and SNRPD3. Interacts with COPRS; promoting its recruitment on histone H4. Interacts with CLNS1A/pICln. Identified in a complex with CLNS1A/pICln and Sm proteins. Interacts with RPS10. Interacts with WDR77 (By similarity). Interacts with IWS1. Interacts with CRY1 (PubMed:23133559). Interacts with POLR2A. Interacts with SMN1/SMN2. Interacts with LYAR; this interaction is direct. Interacts with TTC5/STRAP; this interaction is DNA damage-dependent and promotes PRMT5 interaction with p53/TP53. Interacts with p53/TP53 in response to DNA damage; the interaction is TTC5/STRAP dependent. Interacts with FAM47E; the interaction is direct, promotes PRMT5 localization to chromatin, and does not disrupt its association with WDR77 or STUB1 (By similarity). Interacts with TDRD6 (PubMed:28263986). Interacts with STUB1 (By similarity). Interacts with MBD2 (By similarity). Does not interact with MBD3 (By similarity).</text>
</comment>
<comment type="interaction">
    <interactant intactId="EBI-2527009">
        <id>Q8CIG8</id>
    </interactant>
    <interactant intactId="EBI-847243">
        <id>P25322</id>
        <label>Ccnd1</label>
    </interactant>
    <organismsDiffer>false</organismsDiffer>
    <experiments>5</experiments>
</comment>
<comment type="interaction">
    <interactant intactId="EBI-2527009">
        <id>Q8CIG8</id>
    </interactant>
    <interactant intactId="EBI-6393116">
        <id>Q9CY57</id>
        <label>Chtop</label>
    </interactant>
    <organismsDiffer>false</organismsDiffer>
    <experiments>4</experiments>
</comment>
<comment type="interaction">
    <interactant intactId="EBI-2527009">
        <id>Q8CIG8</id>
    </interactant>
    <interactant intactId="EBI-1266607">
        <id>P97784</id>
        <label>Cry1</label>
    </interactant>
    <organismsDiffer>false</organismsDiffer>
    <experiments>2</experiments>
</comment>
<comment type="subcellular location">
    <subcellularLocation>
        <location evidence="2">Cytoplasm</location>
    </subcellularLocation>
    <subcellularLocation>
        <location evidence="11">Nucleus</location>
    </subcellularLocation>
    <subcellularLocation>
        <location evidence="2">Golgi apparatus</location>
    </subcellularLocation>
    <text evidence="2">Localizes to promoter regions of target genes on chromosomes (By similarity). Localizes to methylated chromatin (By similarity).</text>
</comment>
<comment type="similarity">
    <text evidence="4">Belongs to the class I-like SAM-binding methyltransferase superfamily. Protein arginine N-methyltransferase family.</text>
</comment>
<name>ANM5_MOUSE</name>
<protein>
    <recommendedName>
        <fullName>Protein arginine N-methyltransferase 5</fullName>
        <shortName>Prmt5</shortName>
        <ecNumber evidence="13">2.1.1.320</ecNumber>
    </recommendedName>
    <alternativeName>
        <fullName>Histone-arginine N-methyltransferase PRMT5</fullName>
    </alternativeName>
    <alternativeName>
        <fullName>Jak-binding protein 1</fullName>
    </alternativeName>
    <alternativeName>
        <fullName>Shk1 kinase-binding protein 1 homolog</fullName>
        <shortName>SKB1 homolog</shortName>
    </alternativeName>
</protein>
<gene>
    <name type="primary">Prmt5</name>
    <name type="synonym">Jbp1</name>
    <name type="synonym">Skb1</name>
</gene>
<dbReference type="EC" id="2.1.1.320" evidence="13"/>
<dbReference type="EMBL" id="AK132414">
    <property type="protein sequence ID" value="BAE21155.1"/>
    <property type="molecule type" value="mRNA"/>
</dbReference>
<dbReference type="EMBL" id="AK165165">
    <property type="protein sequence ID" value="BAE38057.1"/>
    <property type="molecule type" value="mRNA"/>
</dbReference>
<dbReference type="EMBL" id="BC023905">
    <property type="protein sequence ID" value="AAH23905.1"/>
    <property type="molecule type" value="mRNA"/>
</dbReference>
<dbReference type="EMBL" id="AF167573">
    <property type="protein sequence ID" value="AAF04503.1"/>
    <property type="molecule type" value="mRNA"/>
</dbReference>
<dbReference type="CCDS" id="CCDS27091.1"/>
<dbReference type="RefSeq" id="NP_001300835.1">
    <property type="nucleotide sequence ID" value="NM_001313906.1"/>
</dbReference>
<dbReference type="RefSeq" id="NP_001300836.1">
    <property type="nucleotide sequence ID" value="NM_001313907.1"/>
</dbReference>
<dbReference type="RefSeq" id="NP_038796.2">
    <property type="nucleotide sequence ID" value="NM_013768.3"/>
</dbReference>
<dbReference type="SMR" id="Q8CIG8"/>
<dbReference type="BioGRID" id="205181">
    <property type="interactions" value="51"/>
</dbReference>
<dbReference type="ComplexPortal" id="CPX-1023">
    <property type="entry name" value="Methylosome"/>
</dbReference>
<dbReference type="FunCoup" id="Q8CIG8">
    <property type="interactions" value="3649"/>
</dbReference>
<dbReference type="IntAct" id="Q8CIG8">
    <property type="interactions" value="20"/>
</dbReference>
<dbReference type="MINT" id="Q8CIG8"/>
<dbReference type="STRING" id="10090.ENSMUSP00000023873"/>
<dbReference type="iPTMnet" id="Q8CIG8"/>
<dbReference type="PhosphoSitePlus" id="Q8CIG8"/>
<dbReference type="SwissPalm" id="Q8CIG8"/>
<dbReference type="PaxDb" id="10090-ENSMUSP00000023873"/>
<dbReference type="PeptideAtlas" id="Q8CIG8"/>
<dbReference type="ProteomicsDB" id="281870"/>
<dbReference type="Pumba" id="Q8CIG8"/>
<dbReference type="DNASU" id="27374"/>
<dbReference type="GeneID" id="27374"/>
<dbReference type="KEGG" id="mmu:27374"/>
<dbReference type="UCSC" id="uc007twf.2">
    <property type="organism name" value="mouse"/>
</dbReference>
<dbReference type="AGR" id="MGI:1351645"/>
<dbReference type="CTD" id="10419"/>
<dbReference type="MGI" id="MGI:1351645">
    <property type="gene designation" value="Prmt5"/>
</dbReference>
<dbReference type="eggNOG" id="KOG0822">
    <property type="taxonomic scope" value="Eukaryota"/>
</dbReference>
<dbReference type="InParanoid" id="Q8CIG8"/>
<dbReference type="OrthoDB" id="1368803at2759"/>
<dbReference type="PhylomeDB" id="Q8CIG8"/>
<dbReference type="TreeFam" id="TF300626"/>
<dbReference type="BRENDA" id="2.1.1.320">
    <property type="organism ID" value="3474"/>
</dbReference>
<dbReference type="Reactome" id="R-MMU-191859">
    <property type="pathway name" value="snRNP Assembly"/>
</dbReference>
<dbReference type="Reactome" id="R-MMU-3214858">
    <property type="pathway name" value="RMTs methylate histone arginines"/>
</dbReference>
<dbReference type="Reactome" id="R-MMU-6804760">
    <property type="pathway name" value="Regulation of TP53 Activity through Methylation"/>
</dbReference>
<dbReference type="BioGRID-ORCS" id="27374">
    <property type="hits" value="29 hits in 83 CRISPR screens"/>
</dbReference>
<dbReference type="ChiTaRS" id="Prmt5">
    <property type="organism name" value="mouse"/>
</dbReference>
<dbReference type="PRO" id="PR:Q8CIG8"/>
<dbReference type="Proteomes" id="UP000000589">
    <property type="component" value="Unplaced"/>
</dbReference>
<dbReference type="RNAct" id="Q8CIG8">
    <property type="molecule type" value="protein"/>
</dbReference>
<dbReference type="GO" id="GO:0005737">
    <property type="term" value="C:cytoplasm"/>
    <property type="evidence" value="ECO:0000314"/>
    <property type="project" value="ParkinsonsUK-UCL"/>
</dbReference>
<dbReference type="GO" id="GO:0005829">
    <property type="term" value="C:cytosol"/>
    <property type="evidence" value="ECO:0000250"/>
    <property type="project" value="UniProtKB"/>
</dbReference>
<dbReference type="GO" id="GO:0005794">
    <property type="term" value="C:Golgi apparatus"/>
    <property type="evidence" value="ECO:0000250"/>
    <property type="project" value="UniProtKB"/>
</dbReference>
<dbReference type="GO" id="GO:0035097">
    <property type="term" value="C:histone methyltransferase complex"/>
    <property type="evidence" value="ECO:0000314"/>
    <property type="project" value="ParkinsonsUK-UCL"/>
</dbReference>
<dbReference type="GO" id="GO:0001673">
    <property type="term" value="C:male germ cell nucleus"/>
    <property type="evidence" value="ECO:0000314"/>
    <property type="project" value="MGI"/>
</dbReference>
<dbReference type="GO" id="GO:0034709">
    <property type="term" value="C:methylosome"/>
    <property type="evidence" value="ECO:0000250"/>
    <property type="project" value="UniProtKB"/>
</dbReference>
<dbReference type="GO" id="GO:0005634">
    <property type="term" value="C:nucleus"/>
    <property type="evidence" value="ECO:0000314"/>
    <property type="project" value="UniProtKB"/>
</dbReference>
<dbReference type="GO" id="GO:0003682">
    <property type="term" value="F:chromatin binding"/>
    <property type="evidence" value="ECO:0000315"/>
    <property type="project" value="MGI"/>
</dbReference>
<dbReference type="GO" id="GO:0070888">
    <property type="term" value="F:E-box binding"/>
    <property type="evidence" value="ECO:0000314"/>
    <property type="project" value="UniProtKB"/>
</dbReference>
<dbReference type="GO" id="GO:0070612">
    <property type="term" value="F:histone H2AR3 methyltransferase activity"/>
    <property type="evidence" value="ECO:0000314"/>
    <property type="project" value="MGI"/>
</dbReference>
<dbReference type="GO" id="GO:0044020">
    <property type="term" value="F:histone H4R3 methyltransferase activity"/>
    <property type="evidence" value="ECO:0000314"/>
    <property type="project" value="MGI"/>
</dbReference>
<dbReference type="GO" id="GO:0008327">
    <property type="term" value="F:methyl-CpG binding"/>
    <property type="evidence" value="ECO:0000250"/>
    <property type="project" value="UniProtKB"/>
</dbReference>
<dbReference type="GO" id="GO:0008168">
    <property type="term" value="F:methyltransferase activity"/>
    <property type="evidence" value="ECO:0000266"/>
    <property type="project" value="MGI"/>
</dbReference>
<dbReference type="GO" id="GO:0046982">
    <property type="term" value="F:protein heterodimerization activity"/>
    <property type="evidence" value="ECO:0000266"/>
    <property type="project" value="MGI"/>
</dbReference>
<dbReference type="GO" id="GO:0016274">
    <property type="term" value="F:protein-arginine N-methyltransferase activity"/>
    <property type="evidence" value="ECO:0000250"/>
    <property type="project" value="UniProtKB"/>
</dbReference>
<dbReference type="GO" id="GO:0035243">
    <property type="term" value="F:protein-arginine omega-N symmetric methyltransferase activity"/>
    <property type="evidence" value="ECO:0000250"/>
    <property type="project" value="UniProtKB"/>
</dbReference>
<dbReference type="GO" id="GO:0003714">
    <property type="term" value="F:transcription corepressor activity"/>
    <property type="evidence" value="ECO:0000315"/>
    <property type="project" value="UniProtKB"/>
</dbReference>
<dbReference type="GO" id="GO:0032922">
    <property type="term" value="P:circadian regulation of gene expression"/>
    <property type="evidence" value="ECO:0000315"/>
    <property type="project" value="UniProtKB"/>
</dbReference>
<dbReference type="GO" id="GO:0006353">
    <property type="term" value="P:DNA-templated transcription termination"/>
    <property type="evidence" value="ECO:0000250"/>
    <property type="project" value="UniProtKB"/>
</dbReference>
<dbReference type="GO" id="GO:0010467">
    <property type="term" value="P:gene expression"/>
    <property type="evidence" value="ECO:0000314"/>
    <property type="project" value="MGI"/>
</dbReference>
<dbReference type="GO" id="GO:0090161">
    <property type="term" value="P:Golgi ribbon formation"/>
    <property type="evidence" value="ECO:0000250"/>
    <property type="project" value="UniProtKB"/>
</dbReference>
<dbReference type="GO" id="GO:0000122">
    <property type="term" value="P:negative regulation of transcription by RNA polymerase II"/>
    <property type="evidence" value="ECO:0000315"/>
    <property type="project" value="MGI"/>
</dbReference>
<dbReference type="GO" id="GO:0018216">
    <property type="term" value="P:peptidyl-arginine methylation"/>
    <property type="evidence" value="ECO:0000250"/>
    <property type="project" value="UniProtKB"/>
</dbReference>
<dbReference type="GO" id="GO:0048026">
    <property type="term" value="P:positive regulation of mRNA splicing, via spliceosome"/>
    <property type="evidence" value="ECO:0000303"/>
    <property type="project" value="ComplexPortal"/>
</dbReference>
<dbReference type="GO" id="GO:0000387">
    <property type="term" value="P:spliceosomal snRNP assembly"/>
    <property type="evidence" value="ECO:0000250"/>
    <property type="project" value="UniProtKB"/>
</dbReference>
<dbReference type="CDD" id="cd02440">
    <property type="entry name" value="AdoMet_MTases"/>
    <property type="match status" value="1"/>
</dbReference>
<dbReference type="FunFam" id="2.70.160.11:FF:000003">
    <property type="entry name" value="Protein arginine N-methyltransferase 5"/>
    <property type="match status" value="1"/>
</dbReference>
<dbReference type="FunFam" id="3.20.20.150:FF:000008">
    <property type="entry name" value="Protein arginine N-methyltransferase 5"/>
    <property type="match status" value="1"/>
</dbReference>
<dbReference type="FunFam" id="3.40.50.150:FF:000029">
    <property type="entry name" value="Protein arginine N-methyltransferase 5"/>
    <property type="match status" value="1"/>
</dbReference>
<dbReference type="Gene3D" id="3.20.20.150">
    <property type="entry name" value="Divalent-metal-dependent TIM barrel enzymes"/>
    <property type="match status" value="1"/>
</dbReference>
<dbReference type="Gene3D" id="2.70.160.11">
    <property type="entry name" value="Hnrnp arginine n-methyltransferase1"/>
    <property type="match status" value="1"/>
</dbReference>
<dbReference type="Gene3D" id="3.40.50.150">
    <property type="entry name" value="Vaccinia Virus protein VP39"/>
    <property type="match status" value="1"/>
</dbReference>
<dbReference type="InterPro" id="IPR025799">
    <property type="entry name" value="Arg_MeTrfase"/>
</dbReference>
<dbReference type="InterPro" id="IPR007857">
    <property type="entry name" value="Arg_MeTrfase_PRMT5"/>
</dbReference>
<dbReference type="InterPro" id="IPR035075">
    <property type="entry name" value="PRMT5"/>
</dbReference>
<dbReference type="InterPro" id="IPR035248">
    <property type="entry name" value="PRMT5_C"/>
</dbReference>
<dbReference type="InterPro" id="IPR035247">
    <property type="entry name" value="PRMT5_TIM"/>
</dbReference>
<dbReference type="InterPro" id="IPR029063">
    <property type="entry name" value="SAM-dependent_MTases_sf"/>
</dbReference>
<dbReference type="PANTHER" id="PTHR10738">
    <property type="entry name" value="PROTEIN ARGININE N-METHYLTRANSFERASE 5"/>
    <property type="match status" value="1"/>
</dbReference>
<dbReference type="PANTHER" id="PTHR10738:SF0">
    <property type="entry name" value="PROTEIN ARGININE N-METHYLTRANSFERASE 5"/>
    <property type="match status" value="1"/>
</dbReference>
<dbReference type="Pfam" id="PF05185">
    <property type="entry name" value="PRMT5"/>
    <property type="match status" value="1"/>
</dbReference>
<dbReference type="Pfam" id="PF17286">
    <property type="entry name" value="PRMT5_C"/>
    <property type="match status" value="1"/>
</dbReference>
<dbReference type="Pfam" id="PF17285">
    <property type="entry name" value="PRMT5_TIM"/>
    <property type="match status" value="1"/>
</dbReference>
<dbReference type="PIRSF" id="PIRSF015894">
    <property type="entry name" value="Skb1_MeTrfase"/>
    <property type="match status" value="1"/>
</dbReference>
<dbReference type="SUPFAM" id="SSF53335">
    <property type="entry name" value="S-adenosyl-L-methionine-dependent methyltransferases"/>
    <property type="match status" value="1"/>
</dbReference>
<dbReference type="PROSITE" id="PS51678">
    <property type="entry name" value="SAM_MT_PRMT"/>
    <property type="match status" value="1"/>
</dbReference>
<accession>Q8CIG8</accession>
<accession>Q3TNN1</accession>
<accession>Q9QZS9</accession>